<evidence type="ECO:0000250" key="1"/>
<evidence type="ECO:0000255" key="2"/>
<evidence type="ECO:0000255" key="3">
    <source>
        <dbReference type="PROSITE-ProRule" id="PRU10059"/>
    </source>
</evidence>
<evidence type="ECO:0000255" key="4">
    <source>
        <dbReference type="PROSITE-ProRule" id="PRU10140"/>
    </source>
</evidence>
<evidence type="ECO:0000269" key="5">
    <source>
    </source>
</evidence>
<evidence type="ECO:0000305" key="6"/>
<name>GUN21_ORYSJ</name>
<organism>
    <name type="scientific">Oryza sativa subsp. japonica</name>
    <name type="common">Rice</name>
    <dbReference type="NCBI Taxonomy" id="39947"/>
    <lineage>
        <taxon>Eukaryota</taxon>
        <taxon>Viridiplantae</taxon>
        <taxon>Streptophyta</taxon>
        <taxon>Embryophyta</taxon>
        <taxon>Tracheophyta</taxon>
        <taxon>Spermatophyta</taxon>
        <taxon>Magnoliopsida</taxon>
        <taxon>Liliopsida</taxon>
        <taxon>Poales</taxon>
        <taxon>Poaceae</taxon>
        <taxon>BOP clade</taxon>
        <taxon>Oryzoideae</taxon>
        <taxon>Oryzeae</taxon>
        <taxon>Oryzinae</taxon>
        <taxon>Oryza</taxon>
        <taxon>Oryza sativa</taxon>
    </lineage>
</organism>
<reference key="1">
    <citation type="journal article" date="2005" name="Nature">
        <title>The map-based sequence of the rice genome.</title>
        <authorList>
            <consortium name="International rice genome sequencing project (IRGSP)"/>
        </authorList>
    </citation>
    <scope>NUCLEOTIDE SEQUENCE [LARGE SCALE GENOMIC DNA]</scope>
    <source>
        <strain>cv. Nipponbare</strain>
    </source>
</reference>
<reference key="2">
    <citation type="journal article" date="2013" name="Rice">
        <title>Improvement of the Oryza sativa Nipponbare reference genome using next generation sequence and optical map data.</title>
        <authorList>
            <person name="Kawahara Y."/>
            <person name="de la Bastide M."/>
            <person name="Hamilton J.P."/>
            <person name="Kanamori H."/>
            <person name="McCombie W.R."/>
            <person name="Ouyang S."/>
            <person name="Schwartz D.C."/>
            <person name="Tanaka T."/>
            <person name="Wu J."/>
            <person name="Zhou S."/>
            <person name="Childs K.L."/>
            <person name="Davidson R.M."/>
            <person name="Lin H."/>
            <person name="Quesada-Ocampo L."/>
            <person name="Vaillancourt B."/>
            <person name="Sakai H."/>
            <person name="Lee S.S."/>
            <person name="Kim J."/>
            <person name="Numa H."/>
            <person name="Itoh T."/>
            <person name="Buell C.R."/>
            <person name="Matsumoto T."/>
        </authorList>
    </citation>
    <scope>GENOME REANNOTATION</scope>
    <source>
        <strain>cv. Nipponbare</strain>
    </source>
</reference>
<reference key="3">
    <citation type="journal article" date="2006" name="Plant Mol. Biol.">
        <title>OsGLU1, a putative membrane-bound endo-1,4-beta-D-glucanase from rice, affects plant internode elongation.</title>
        <authorList>
            <person name="Zhou H.-L."/>
            <person name="He S.-J."/>
            <person name="Cao Y.-R."/>
            <person name="Chen T."/>
            <person name="Du B.-X."/>
            <person name="Chu C.-C."/>
            <person name="Zhang J.-S."/>
            <person name="Chen S.-Y."/>
        </authorList>
    </citation>
    <scope>TISSUE SPECIFICITY</scope>
</reference>
<sequence length="529" mass="57924">MVAAMTMCAAVAVLLVLTSTMAAAAGDGDGDGGGFDYKKALHSGLLYFEAQRSGHLPYNQRVRWRGHSGLADGLQQGVDLVGGYYDAGDNVKFGLPMAFTMTMLSWAAAEFWDEIAAAGERRHVLEAIKWGTDYLVKAHTAADELWAEVGDGDTDHYCWQRPEDMTTSRQAYKVDRDNPGSDVAGETAAALAAASIVFRRSKPRYSRLLLRHAEQLFDFGDRYRGKYDSSIGEVRAYYASVSGYGDELLWAALWLHRATGRRGYLDYAVAMADELGGVGWAVTEFSWDVKYAGLQILAAKVLMDGGDHPAAHAATLEQYRSKAEHYLCACLGKNAAAGDNVNRTAGGMLFVRRWNNMQYVTNAAFLLTVYSRYLRDSGGDTIRCSGGAMATGDELAAMARAQADYVLGDNPAGVSYMVGYGRRFPRRVHHRGASMVSHRADGRFVGCVQGYDRWFRRGGANPNVVAGAIVGGPDDRDRFRDSRDNYMQTEACTYNTAPMVGVFAHLHAQKMAARTANNNADRSMIKRVD</sequence>
<gene>
    <name type="primary">GLU9</name>
    <name type="ordered locus">Os08g0425300</name>
    <name type="ordered locus">LOC_Os08g32940</name>
    <name type="ORF">P0456B03.110</name>
</gene>
<dbReference type="EC" id="3.2.1.4"/>
<dbReference type="EMBL" id="AP004463">
    <property type="protein sequence ID" value="BAC55745.1"/>
    <property type="molecule type" value="Genomic_DNA"/>
</dbReference>
<dbReference type="EMBL" id="AP014964">
    <property type="protein sequence ID" value="BAT05499.1"/>
    <property type="molecule type" value="Genomic_DNA"/>
</dbReference>
<dbReference type="RefSeq" id="XP_015649456.1">
    <property type="nucleotide sequence ID" value="XM_015793970.1"/>
</dbReference>
<dbReference type="SMR" id="Q84Q51"/>
<dbReference type="FunCoup" id="Q84Q51">
    <property type="interactions" value="20"/>
</dbReference>
<dbReference type="STRING" id="39947.Q84Q51"/>
<dbReference type="CAZy" id="GH9">
    <property type="family name" value="Glycoside Hydrolase Family 9"/>
</dbReference>
<dbReference type="GlyCosmos" id="Q84Q51">
    <property type="glycosylation" value="1 site, No reported glycans"/>
</dbReference>
<dbReference type="PaxDb" id="39947-Q84Q51"/>
<dbReference type="EnsemblPlants" id="Os08t0425300-00">
    <property type="protein sequence ID" value="Os08t0425300-00"/>
    <property type="gene ID" value="Os08g0425300"/>
</dbReference>
<dbReference type="GeneID" id="107276216"/>
<dbReference type="Gramene" id="Os08t0425300-00">
    <property type="protein sequence ID" value="Os08t0425300-00"/>
    <property type="gene ID" value="Os08g0425300"/>
</dbReference>
<dbReference type="KEGG" id="osa:107276216"/>
<dbReference type="eggNOG" id="ENOG502QRF6">
    <property type="taxonomic scope" value="Eukaryota"/>
</dbReference>
<dbReference type="HOGENOM" id="CLU_008926_1_4_1"/>
<dbReference type="InParanoid" id="Q84Q51"/>
<dbReference type="OMA" id="DTIRCSG"/>
<dbReference type="OrthoDB" id="10257085at2759"/>
<dbReference type="Proteomes" id="UP000000763">
    <property type="component" value="Chromosome 8"/>
</dbReference>
<dbReference type="Proteomes" id="UP000059680">
    <property type="component" value="Chromosome 8"/>
</dbReference>
<dbReference type="GO" id="GO:0005576">
    <property type="term" value="C:extracellular region"/>
    <property type="evidence" value="ECO:0007669"/>
    <property type="project" value="UniProtKB-SubCell"/>
</dbReference>
<dbReference type="GO" id="GO:0008810">
    <property type="term" value="F:cellulase activity"/>
    <property type="evidence" value="ECO:0007669"/>
    <property type="project" value="UniProtKB-EC"/>
</dbReference>
<dbReference type="GO" id="GO:0071555">
    <property type="term" value="P:cell wall organization"/>
    <property type="evidence" value="ECO:0007669"/>
    <property type="project" value="UniProtKB-KW"/>
</dbReference>
<dbReference type="GO" id="GO:0030245">
    <property type="term" value="P:cellulose catabolic process"/>
    <property type="evidence" value="ECO:0007669"/>
    <property type="project" value="UniProtKB-KW"/>
</dbReference>
<dbReference type="FunFam" id="1.50.10.10:FF:000020">
    <property type="entry name" value="Endoglucanase"/>
    <property type="match status" value="1"/>
</dbReference>
<dbReference type="Gene3D" id="1.50.10.10">
    <property type="match status" value="1"/>
</dbReference>
<dbReference type="InterPro" id="IPR008928">
    <property type="entry name" value="6-hairpin_glycosidase_sf"/>
</dbReference>
<dbReference type="InterPro" id="IPR012341">
    <property type="entry name" value="6hp_glycosidase-like_sf"/>
</dbReference>
<dbReference type="InterPro" id="IPR001701">
    <property type="entry name" value="Glyco_hydro_9"/>
</dbReference>
<dbReference type="InterPro" id="IPR018221">
    <property type="entry name" value="Glyco_hydro_9_His_AS"/>
</dbReference>
<dbReference type="PANTHER" id="PTHR22298">
    <property type="entry name" value="ENDO-1,4-BETA-GLUCANASE"/>
    <property type="match status" value="1"/>
</dbReference>
<dbReference type="Pfam" id="PF00759">
    <property type="entry name" value="Glyco_hydro_9"/>
    <property type="match status" value="1"/>
</dbReference>
<dbReference type="SUPFAM" id="SSF48208">
    <property type="entry name" value="Six-hairpin glycosidases"/>
    <property type="match status" value="1"/>
</dbReference>
<dbReference type="PROSITE" id="PS60032">
    <property type="entry name" value="GH9_1"/>
    <property type="match status" value="1"/>
</dbReference>
<dbReference type="PROSITE" id="PS00592">
    <property type="entry name" value="GH9_2"/>
    <property type="match status" value="1"/>
</dbReference>
<accession>Q84Q51</accession>
<accession>A0A0P0XFV9</accession>
<protein>
    <recommendedName>
        <fullName>Endoglucanase 21</fullName>
        <ecNumber>3.2.1.4</ecNumber>
    </recommendedName>
    <alternativeName>
        <fullName>Endo-1,4-beta glucanase 21</fullName>
    </alternativeName>
    <alternativeName>
        <fullName>OsGLU9</fullName>
    </alternativeName>
</protein>
<feature type="signal peptide" evidence="2">
    <location>
        <begin position="1"/>
        <end position="24"/>
    </location>
</feature>
<feature type="chain" id="PRO_0000249298" description="Endoglucanase 21">
    <location>
        <begin position="25"/>
        <end position="529"/>
    </location>
</feature>
<feature type="active site" description="Nucleophile" evidence="4">
    <location>
        <position position="89"/>
    </location>
</feature>
<feature type="active site" evidence="3">
    <location>
        <position position="429"/>
    </location>
</feature>
<feature type="active site" evidence="3">
    <location>
        <position position="481"/>
    </location>
</feature>
<feature type="active site" evidence="3">
    <location>
        <position position="490"/>
    </location>
</feature>
<feature type="glycosylation site" description="N-linked (GlcNAc...) asparagine" evidence="2">
    <location>
        <position position="342"/>
    </location>
</feature>
<keyword id="KW-0119">Carbohydrate metabolism</keyword>
<keyword id="KW-0961">Cell wall biogenesis/degradation</keyword>
<keyword id="KW-0136">Cellulose degradation</keyword>
<keyword id="KW-0325">Glycoprotein</keyword>
<keyword id="KW-0326">Glycosidase</keyword>
<keyword id="KW-0378">Hydrolase</keyword>
<keyword id="KW-0624">Polysaccharide degradation</keyword>
<keyword id="KW-1185">Reference proteome</keyword>
<keyword id="KW-0964">Secreted</keyword>
<keyword id="KW-0732">Signal</keyword>
<comment type="catalytic activity">
    <reaction>
        <text>Endohydrolysis of (1-&gt;4)-beta-D-glucosidic linkages in cellulose, lichenin and cereal beta-D-glucans.</text>
        <dbReference type="EC" id="3.2.1.4"/>
    </reaction>
</comment>
<comment type="subcellular location">
    <subcellularLocation>
        <location evidence="1">Secreted</location>
    </subcellularLocation>
</comment>
<comment type="tissue specificity">
    <text evidence="5">Expressed in roots and flowers.</text>
</comment>
<comment type="similarity">
    <text evidence="4 6">Belongs to the glycosyl hydrolase 9 (cellulase E) family.</text>
</comment>
<proteinExistence type="evidence at transcript level"/>